<protein>
    <recommendedName>
        <fullName>Stage 0 sporulation protein A homolog</fullName>
    </recommendedName>
</protein>
<proteinExistence type="inferred from homology"/>
<keyword id="KW-0010">Activator</keyword>
<keyword id="KW-0106">Calcium</keyword>
<keyword id="KW-0963">Cytoplasm</keyword>
<keyword id="KW-0238">DNA-binding</keyword>
<keyword id="KW-0479">Metal-binding</keyword>
<keyword id="KW-0597">Phosphoprotein</keyword>
<keyword id="KW-0678">Repressor</keyword>
<keyword id="KW-0749">Sporulation</keyword>
<keyword id="KW-0804">Transcription</keyword>
<keyword id="KW-0805">Transcription regulation</keyword>
<keyword id="KW-0902">Two-component regulatory system</keyword>
<evidence type="ECO:0000250" key="1"/>
<evidence type="ECO:0000255" key="2"/>
<evidence type="ECO:0000255" key="3">
    <source>
        <dbReference type="PROSITE-ProRule" id="PRU00169"/>
    </source>
</evidence>
<evidence type="ECO:0000305" key="4"/>
<comment type="function">
    <text evidence="1">May play the central regulatory role in sporulation. It may be an element of the effector pathway responsible for the activation of sporulation genes in response to nutritional stress. Spo0A may act in concert with spo0H (a sigma factor) to control the expression of some genes that are critical to the sporulation process (By similarity).</text>
</comment>
<comment type="cofactor">
    <cofactor evidence="1">
        <name>Ca(2+)</name>
        <dbReference type="ChEBI" id="CHEBI:29108"/>
    </cofactor>
    <text evidence="1">Binds 1 Ca(2+) ion per subunit.</text>
</comment>
<comment type="subcellular location">
    <subcellularLocation>
        <location evidence="4">Cytoplasm</location>
    </subcellularLocation>
</comment>
<reference key="1">
    <citation type="submission" date="2007-06" db="EMBL/GenBank/DDBJ databases">
        <title>Complete sequence of Clostridium beijerinckii NCIMB 8052.</title>
        <authorList>
            <consortium name="US DOE Joint Genome Institute"/>
            <person name="Copeland A."/>
            <person name="Lucas S."/>
            <person name="Lapidus A."/>
            <person name="Barry K."/>
            <person name="Detter J.C."/>
            <person name="Glavina del Rio T."/>
            <person name="Hammon N."/>
            <person name="Israni S."/>
            <person name="Dalin E."/>
            <person name="Tice H."/>
            <person name="Pitluck S."/>
            <person name="Sims D."/>
            <person name="Brettin T."/>
            <person name="Bruce D."/>
            <person name="Tapia R."/>
            <person name="Brainard J."/>
            <person name="Schmutz J."/>
            <person name="Larimer F."/>
            <person name="Land M."/>
            <person name="Hauser L."/>
            <person name="Kyrpides N."/>
            <person name="Mikhailova N."/>
            <person name="Bennet G."/>
            <person name="Cann I."/>
            <person name="Chen J.-S."/>
            <person name="Contreras A.L."/>
            <person name="Jones D."/>
            <person name="Kashket E."/>
            <person name="Mitchell W."/>
            <person name="Stoddard S."/>
            <person name="Schwarz W."/>
            <person name="Qureshi N."/>
            <person name="Young M."/>
            <person name="Shi Z."/>
            <person name="Ezeji T."/>
            <person name="White B."/>
            <person name="Blaschek H."/>
            <person name="Richardson P."/>
        </authorList>
    </citation>
    <scope>NUCLEOTIDE SEQUENCE [LARGE SCALE GENOMIC DNA]</scope>
    <source>
        <strain>ATCC 51743 / NCIMB 8052</strain>
    </source>
</reference>
<reference key="2">
    <citation type="journal article" date="1994" name="Mol. Microbiol.">
        <title>Characterization of spo0A homologues in diverse Bacillus and Clostridium species identifies a probable DNA-binding domain.</title>
        <authorList>
            <person name="Brown D.P."/>
            <person name="Ganova-Raeva L."/>
            <person name="Green B.D."/>
            <person name="Wilkinson S.R."/>
            <person name="Young M."/>
            <person name="Youngman P."/>
        </authorList>
    </citation>
    <scope>NUCLEOTIDE SEQUENCE [GENOMIC DNA] OF 1-223</scope>
</reference>
<sequence>MEDSKISVLIADDNKEFCSILNDYLLNQKDIVVTGIAKDGREALELIVERKPDLVILDIIMPHLDGLGVLEKLNTMQLEKVPRIIILSAVGQDKITQQAITLGADYYTVKPFDMEVFTKRIREMFNSSAAVQETNMRNSYASSMISTPSENKTKAPIDLETEITNIIHEVGVPAHIKGYMYLREAITMVVNDMELLSAVTKELYPSIAKKYNTTASRVERAIRHAIEVAWGRGQIEAINRLFGYTVHNDKGKPTNSEFIAIIADKLRLKNKVS</sequence>
<feature type="chain" id="PRO_0000081238" description="Stage 0 sporulation protein A homolog">
    <location>
        <begin position="1"/>
        <end position="273"/>
    </location>
</feature>
<feature type="domain" description="Response regulatory" evidence="3">
    <location>
        <begin position="7"/>
        <end position="125"/>
    </location>
</feature>
<feature type="DNA-binding region" description="H-T-H motif" evidence="2">
    <location>
        <begin position="205"/>
        <end position="224"/>
    </location>
</feature>
<feature type="binding site" evidence="1">
    <location>
        <position position="12"/>
    </location>
    <ligand>
        <name>Ca(2+)</name>
        <dbReference type="ChEBI" id="CHEBI:29108"/>
    </ligand>
</feature>
<feature type="binding site" evidence="1">
    <location>
        <position position="13"/>
    </location>
    <ligand>
        <name>Ca(2+)</name>
        <dbReference type="ChEBI" id="CHEBI:29108"/>
    </ligand>
</feature>
<feature type="binding site" evidence="1">
    <location>
        <position position="58"/>
    </location>
    <ligand>
        <name>Ca(2+)</name>
        <dbReference type="ChEBI" id="CHEBI:29108"/>
    </ligand>
</feature>
<feature type="modified residue" description="4-aspartylphosphate" evidence="3">
    <location>
        <position position="58"/>
    </location>
</feature>
<feature type="sequence conflict" description="In Ref. 2; AAA18880." evidence="4" ref="2">
    <original>R</original>
    <variation>S</variation>
    <location>
        <position position="41"/>
    </location>
</feature>
<dbReference type="EMBL" id="CP000721">
    <property type="protein sequence ID" value="ABR33884.1"/>
    <property type="molecule type" value="Genomic_DNA"/>
</dbReference>
<dbReference type="EMBL" id="U09979">
    <property type="protein sequence ID" value="AAA18880.1"/>
    <property type="molecule type" value="Genomic_DNA"/>
</dbReference>
<dbReference type="RefSeq" id="WP_011969036.1">
    <property type="nucleotide sequence ID" value="NC_009617.1"/>
</dbReference>
<dbReference type="SMR" id="P52936"/>
<dbReference type="KEGG" id="cbe:Cbei_1712"/>
<dbReference type="eggNOG" id="COG0745">
    <property type="taxonomic scope" value="Bacteria"/>
</dbReference>
<dbReference type="HOGENOM" id="CLU_072509_0_0_9"/>
<dbReference type="Proteomes" id="UP000000565">
    <property type="component" value="Chromosome"/>
</dbReference>
<dbReference type="GO" id="GO:0005737">
    <property type="term" value="C:cytoplasm"/>
    <property type="evidence" value="ECO:0007669"/>
    <property type="project" value="UniProtKB-SubCell"/>
</dbReference>
<dbReference type="GO" id="GO:0005509">
    <property type="term" value="F:calcium ion binding"/>
    <property type="evidence" value="ECO:0007669"/>
    <property type="project" value="InterPro"/>
</dbReference>
<dbReference type="GO" id="GO:0003677">
    <property type="term" value="F:DNA binding"/>
    <property type="evidence" value="ECO:0007669"/>
    <property type="project" value="UniProtKB-KW"/>
</dbReference>
<dbReference type="GO" id="GO:0003700">
    <property type="term" value="F:DNA-binding transcription factor activity"/>
    <property type="evidence" value="ECO:0007669"/>
    <property type="project" value="InterPro"/>
</dbReference>
<dbReference type="GO" id="GO:0051606">
    <property type="term" value="P:detection of stimulus"/>
    <property type="evidence" value="ECO:0007669"/>
    <property type="project" value="InterPro"/>
</dbReference>
<dbReference type="GO" id="GO:0000160">
    <property type="term" value="P:phosphorelay signal transduction system"/>
    <property type="evidence" value="ECO:0007669"/>
    <property type="project" value="UniProtKB-KW"/>
</dbReference>
<dbReference type="GO" id="GO:0042173">
    <property type="term" value="P:regulation of sporulation resulting in formation of a cellular spore"/>
    <property type="evidence" value="ECO:0007669"/>
    <property type="project" value="InterPro"/>
</dbReference>
<dbReference type="GO" id="GO:0030435">
    <property type="term" value="P:sporulation resulting in formation of a cellular spore"/>
    <property type="evidence" value="ECO:0007669"/>
    <property type="project" value="UniProtKB-KW"/>
</dbReference>
<dbReference type="CDD" id="cd17561">
    <property type="entry name" value="REC_Spo0A"/>
    <property type="match status" value="1"/>
</dbReference>
<dbReference type="FunFam" id="1.10.10.10:FF:000107">
    <property type="entry name" value="Stage 0 sporulation protein A"/>
    <property type="match status" value="1"/>
</dbReference>
<dbReference type="Gene3D" id="3.40.50.2300">
    <property type="match status" value="1"/>
</dbReference>
<dbReference type="Gene3D" id="1.10.10.10">
    <property type="entry name" value="Winged helix-like DNA-binding domain superfamily/Winged helix DNA-binding domain"/>
    <property type="match status" value="1"/>
</dbReference>
<dbReference type="InterPro" id="IPR011006">
    <property type="entry name" value="CheY-like_superfamily"/>
</dbReference>
<dbReference type="InterPro" id="IPR016032">
    <property type="entry name" value="Sig_transdc_resp-reg_C-effctor"/>
</dbReference>
<dbReference type="InterPro" id="IPR001789">
    <property type="entry name" value="Sig_transdc_resp-reg_receiver"/>
</dbReference>
<dbReference type="InterPro" id="IPR014879">
    <property type="entry name" value="Spo0A_C"/>
</dbReference>
<dbReference type="InterPro" id="IPR012052">
    <property type="entry name" value="Spore_0_A"/>
</dbReference>
<dbReference type="InterPro" id="IPR052048">
    <property type="entry name" value="ST_Response_Regulator"/>
</dbReference>
<dbReference type="InterPro" id="IPR036388">
    <property type="entry name" value="WH-like_DNA-bd_sf"/>
</dbReference>
<dbReference type="NCBIfam" id="TIGR02875">
    <property type="entry name" value="spore_0_A"/>
    <property type="match status" value="1"/>
</dbReference>
<dbReference type="PANTHER" id="PTHR43228:SF5">
    <property type="entry name" value="STAGE 0 SPORULATION PROTEIN A"/>
    <property type="match status" value="1"/>
</dbReference>
<dbReference type="PANTHER" id="PTHR43228">
    <property type="entry name" value="TWO-COMPONENT RESPONSE REGULATOR"/>
    <property type="match status" value="1"/>
</dbReference>
<dbReference type="Pfam" id="PF00072">
    <property type="entry name" value="Response_reg"/>
    <property type="match status" value="1"/>
</dbReference>
<dbReference type="Pfam" id="PF08769">
    <property type="entry name" value="Spo0A_C"/>
    <property type="match status" value="1"/>
</dbReference>
<dbReference type="PIRSF" id="PIRSF002937">
    <property type="entry name" value="Res_reg_Spo0A"/>
    <property type="match status" value="1"/>
</dbReference>
<dbReference type="SMART" id="SM00448">
    <property type="entry name" value="REC"/>
    <property type="match status" value="1"/>
</dbReference>
<dbReference type="SUPFAM" id="SSF46894">
    <property type="entry name" value="C-terminal effector domain of the bipartite response regulators"/>
    <property type="match status" value="1"/>
</dbReference>
<dbReference type="SUPFAM" id="SSF52172">
    <property type="entry name" value="CheY-like"/>
    <property type="match status" value="1"/>
</dbReference>
<dbReference type="PROSITE" id="PS50110">
    <property type="entry name" value="RESPONSE_REGULATORY"/>
    <property type="match status" value="1"/>
</dbReference>
<gene>
    <name type="primary">spo0A</name>
    <name type="ordered locus">Cbei_1712</name>
</gene>
<organism>
    <name type="scientific">Clostridium beijerinckii (strain ATCC 51743 / NCIMB 8052)</name>
    <name type="common">Clostridium acetobutylicum</name>
    <dbReference type="NCBI Taxonomy" id="290402"/>
    <lineage>
        <taxon>Bacteria</taxon>
        <taxon>Bacillati</taxon>
        <taxon>Bacillota</taxon>
        <taxon>Clostridia</taxon>
        <taxon>Eubacteriales</taxon>
        <taxon>Clostridiaceae</taxon>
        <taxon>Clostridium</taxon>
    </lineage>
</organism>
<name>SP0A_CLOB8</name>
<accession>P52936</accession>
<accession>A6LU54</accession>